<proteinExistence type="inferred from homology"/>
<comment type="function">
    <text evidence="1">Together with its co-chaperonin GroES, plays an essential role in assisting protein folding. The GroEL-GroES system forms a nano-cage that allows encapsulation of the non-native substrate proteins and provides a physical environment optimized to promote and accelerate protein folding.</text>
</comment>
<comment type="catalytic activity">
    <reaction evidence="1">
        <text>ATP + H2O + a folded polypeptide = ADP + phosphate + an unfolded polypeptide.</text>
        <dbReference type="EC" id="5.6.1.7"/>
    </reaction>
</comment>
<comment type="subunit">
    <text evidence="1">Forms a cylinder of 14 subunits composed of two heptameric rings stacked back-to-back. Interacts with the co-chaperonin GroES.</text>
</comment>
<comment type="subcellular location">
    <subcellularLocation>
        <location evidence="1">Cytoplasm</location>
    </subcellularLocation>
</comment>
<comment type="similarity">
    <text evidence="1">Belongs to the chaperonin (HSP60) family.</text>
</comment>
<sequence length="538" mass="57630">MVKQLKFSEDARQAMLRGVDQLANAVKVTIGPKGRNVVLDKEFTAPLITNDGVTIAKEIELEDPYENMGAKLVQEVANKTNEIAGDGTTTATVLAQAMIQEGLKNVTSGANPVGLRQGIDKAVKVAVEALHENSQKVENKNEIAQVGAISAADEEIGRYISEAMEKVGNDGVITIEESNGLNTELEVVEGMQFDRGYQSPYMVTDSDKMVAELERPYILVTDKKISSFQDILPLLEQVVQSNRPILIVADEVEGDALTNIVLNRMRGTFTAVAVKAPGFGDRRKAMLEDLAILTGAQVITDDLGLDLKDASIDMLGTASKVEVTKDNTTVVDGDGDENSIDARVSQLKSQIEETESDFDREKLQERLAKLAGGVAVIKVGAASETELKERKLRIEDALNSTRAAVEEGIVAGGGTALVNVYQKVSEIEAEGDIETGVNIVLKALTAPVRQIAENAGLEGSVIVERLKNAEPGVGFNAATNEWVNMLEEGIVDPTKVTRSALQHAASVAAMFLTTEAVVASIPEKNNDQPNMGGMPGMM</sequence>
<organism>
    <name type="scientific">Staphylococcus aureus (strain COL)</name>
    <dbReference type="NCBI Taxonomy" id="93062"/>
    <lineage>
        <taxon>Bacteria</taxon>
        <taxon>Bacillati</taxon>
        <taxon>Bacillota</taxon>
        <taxon>Bacilli</taxon>
        <taxon>Bacillales</taxon>
        <taxon>Staphylococcaceae</taxon>
        <taxon>Staphylococcus</taxon>
    </lineage>
</organism>
<accession>Q5HEH2</accession>
<reference key="1">
    <citation type="journal article" date="2005" name="J. Bacteriol.">
        <title>Insights on evolution of virulence and resistance from the complete genome analysis of an early methicillin-resistant Staphylococcus aureus strain and a biofilm-producing methicillin-resistant Staphylococcus epidermidis strain.</title>
        <authorList>
            <person name="Gill S.R."/>
            <person name="Fouts D.E."/>
            <person name="Archer G.L."/>
            <person name="Mongodin E.F."/>
            <person name="DeBoy R.T."/>
            <person name="Ravel J."/>
            <person name="Paulsen I.T."/>
            <person name="Kolonay J.F."/>
            <person name="Brinkac L.M."/>
            <person name="Beanan M.J."/>
            <person name="Dodson R.J."/>
            <person name="Daugherty S.C."/>
            <person name="Madupu R."/>
            <person name="Angiuoli S.V."/>
            <person name="Durkin A.S."/>
            <person name="Haft D.H."/>
            <person name="Vamathevan J.J."/>
            <person name="Khouri H."/>
            <person name="Utterback T.R."/>
            <person name="Lee C."/>
            <person name="Dimitrov G."/>
            <person name="Jiang L."/>
            <person name="Qin H."/>
            <person name="Weidman J."/>
            <person name="Tran K."/>
            <person name="Kang K.H."/>
            <person name="Hance I.R."/>
            <person name="Nelson K.E."/>
            <person name="Fraser C.M."/>
        </authorList>
    </citation>
    <scope>NUCLEOTIDE SEQUENCE [LARGE SCALE GENOMIC DNA]</scope>
    <source>
        <strain>COL</strain>
    </source>
</reference>
<evidence type="ECO:0000255" key="1">
    <source>
        <dbReference type="HAMAP-Rule" id="MF_00600"/>
    </source>
</evidence>
<dbReference type="EC" id="5.6.1.7" evidence="1"/>
<dbReference type="EMBL" id="CP000046">
    <property type="protein sequence ID" value="AAW36981.1"/>
    <property type="molecule type" value="Genomic_DNA"/>
</dbReference>
<dbReference type="RefSeq" id="WP_000240645.1">
    <property type="nucleotide sequence ID" value="NZ_JBGOFO010000006.1"/>
</dbReference>
<dbReference type="SMR" id="Q5HEH2"/>
<dbReference type="KEGG" id="sac:SACOL2016"/>
<dbReference type="HOGENOM" id="CLU_016503_3_0_9"/>
<dbReference type="Proteomes" id="UP000000530">
    <property type="component" value="Chromosome"/>
</dbReference>
<dbReference type="GO" id="GO:0005737">
    <property type="term" value="C:cytoplasm"/>
    <property type="evidence" value="ECO:0007669"/>
    <property type="project" value="UniProtKB-SubCell"/>
</dbReference>
<dbReference type="GO" id="GO:0005524">
    <property type="term" value="F:ATP binding"/>
    <property type="evidence" value="ECO:0007669"/>
    <property type="project" value="UniProtKB-UniRule"/>
</dbReference>
<dbReference type="GO" id="GO:0140662">
    <property type="term" value="F:ATP-dependent protein folding chaperone"/>
    <property type="evidence" value="ECO:0007669"/>
    <property type="project" value="InterPro"/>
</dbReference>
<dbReference type="GO" id="GO:0016853">
    <property type="term" value="F:isomerase activity"/>
    <property type="evidence" value="ECO:0007669"/>
    <property type="project" value="UniProtKB-KW"/>
</dbReference>
<dbReference type="GO" id="GO:0051082">
    <property type="term" value="F:unfolded protein binding"/>
    <property type="evidence" value="ECO:0007669"/>
    <property type="project" value="UniProtKB-UniRule"/>
</dbReference>
<dbReference type="GO" id="GO:0042026">
    <property type="term" value="P:protein refolding"/>
    <property type="evidence" value="ECO:0007669"/>
    <property type="project" value="UniProtKB-UniRule"/>
</dbReference>
<dbReference type="CDD" id="cd03344">
    <property type="entry name" value="GroEL"/>
    <property type="match status" value="1"/>
</dbReference>
<dbReference type="FunFam" id="1.10.560.10:FF:000001">
    <property type="entry name" value="60 kDa chaperonin"/>
    <property type="match status" value="1"/>
</dbReference>
<dbReference type="FunFam" id="3.50.7.10:FF:000001">
    <property type="entry name" value="60 kDa chaperonin"/>
    <property type="match status" value="1"/>
</dbReference>
<dbReference type="Gene3D" id="3.50.7.10">
    <property type="entry name" value="GroEL"/>
    <property type="match status" value="1"/>
</dbReference>
<dbReference type="Gene3D" id="1.10.560.10">
    <property type="entry name" value="GroEL-like equatorial domain"/>
    <property type="match status" value="1"/>
</dbReference>
<dbReference type="Gene3D" id="3.30.260.10">
    <property type="entry name" value="TCP-1-like chaperonin intermediate domain"/>
    <property type="match status" value="1"/>
</dbReference>
<dbReference type="HAMAP" id="MF_00600">
    <property type="entry name" value="CH60"/>
    <property type="match status" value="1"/>
</dbReference>
<dbReference type="InterPro" id="IPR018370">
    <property type="entry name" value="Chaperonin_Cpn60_CS"/>
</dbReference>
<dbReference type="InterPro" id="IPR001844">
    <property type="entry name" value="Cpn60/GroEL"/>
</dbReference>
<dbReference type="InterPro" id="IPR002423">
    <property type="entry name" value="Cpn60/GroEL/TCP-1"/>
</dbReference>
<dbReference type="InterPro" id="IPR027409">
    <property type="entry name" value="GroEL-like_apical_dom_sf"/>
</dbReference>
<dbReference type="InterPro" id="IPR027413">
    <property type="entry name" value="GROEL-like_equatorial_sf"/>
</dbReference>
<dbReference type="InterPro" id="IPR027410">
    <property type="entry name" value="TCP-1-like_intermed_sf"/>
</dbReference>
<dbReference type="NCBIfam" id="TIGR02348">
    <property type="entry name" value="GroEL"/>
    <property type="match status" value="1"/>
</dbReference>
<dbReference type="NCBIfam" id="NF000592">
    <property type="entry name" value="PRK00013.1"/>
    <property type="match status" value="1"/>
</dbReference>
<dbReference type="NCBIfam" id="NF009487">
    <property type="entry name" value="PRK12849.1"/>
    <property type="match status" value="1"/>
</dbReference>
<dbReference type="NCBIfam" id="NF009488">
    <property type="entry name" value="PRK12850.1"/>
    <property type="match status" value="1"/>
</dbReference>
<dbReference type="NCBIfam" id="NF009489">
    <property type="entry name" value="PRK12851.1"/>
    <property type="match status" value="1"/>
</dbReference>
<dbReference type="PANTHER" id="PTHR45633">
    <property type="entry name" value="60 KDA HEAT SHOCK PROTEIN, MITOCHONDRIAL"/>
    <property type="match status" value="1"/>
</dbReference>
<dbReference type="Pfam" id="PF00118">
    <property type="entry name" value="Cpn60_TCP1"/>
    <property type="match status" value="1"/>
</dbReference>
<dbReference type="PRINTS" id="PR00298">
    <property type="entry name" value="CHAPERONIN60"/>
</dbReference>
<dbReference type="SUPFAM" id="SSF52029">
    <property type="entry name" value="GroEL apical domain-like"/>
    <property type="match status" value="1"/>
</dbReference>
<dbReference type="SUPFAM" id="SSF48592">
    <property type="entry name" value="GroEL equatorial domain-like"/>
    <property type="match status" value="1"/>
</dbReference>
<dbReference type="SUPFAM" id="SSF54849">
    <property type="entry name" value="GroEL-intermediate domain like"/>
    <property type="match status" value="1"/>
</dbReference>
<dbReference type="PROSITE" id="PS00296">
    <property type="entry name" value="CHAPERONINS_CPN60"/>
    <property type="match status" value="1"/>
</dbReference>
<gene>
    <name evidence="1" type="primary">groEL</name>
    <name evidence="1" type="synonym">groL</name>
    <name type="ordered locus">SACOL2016</name>
</gene>
<name>CH60_STAAC</name>
<keyword id="KW-0067">ATP-binding</keyword>
<keyword id="KW-0143">Chaperone</keyword>
<keyword id="KW-0963">Cytoplasm</keyword>
<keyword id="KW-0413">Isomerase</keyword>
<keyword id="KW-0547">Nucleotide-binding</keyword>
<protein>
    <recommendedName>
        <fullName evidence="1">Chaperonin GroEL</fullName>
        <ecNumber evidence="1">5.6.1.7</ecNumber>
    </recommendedName>
    <alternativeName>
        <fullName evidence="1">60 kDa chaperonin</fullName>
    </alternativeName>
    <alternativeName>
        <fullName evidence="1">Chaperonin-60</fullName>
        <shortName evidence="1">Cpn60</shortName>
    </alternativeName>
</protein>
<feature type="chain" id="PRO_0000063531" description="Chaperonin GroEL">
    <location>
        <begin position="1"/>
        <end position="538"/>
    </location>
</feature>
<feature type="binding site" evidence="1">
    <location>
        <begin position="29"/>
        <end position="32"/>
    </location>
    <ligand>
        <name>ATP</name>
        <dbReference type="ChEBI" id="CHEBI:30616"/>
    </ligand>
</feature>
<feature type="binding site" evidence="1">
    <location>
        <begin position="86"/>
        <end position="90"/>
    </location>
    <ligand>
        <name>ATP</name>
        <dbReference type="ChEBI" id="CHEBI:30616"/>
    </ligand>
</feature>
<feature type="binding site" evidence="1">
    <location>
        <position position="413"/>
    </location>
    <ligand>
        <name>ATP</name>
        <dbReference type="ChEBI" id="CHEBI:30616"/>
    </ligand>
</feature>
<feature type="binding site" evidence="1">
    <location>
        <begin position="476"/>
        <end position="478"/>
    </location>
    <ligand>
        <name>ATP</name>
        <dbReference type="ChEBI" id="CHEBI:30616"/>
    </ligand>
</feature>
<feature type="binding site" evidence="1">
    <location>
        <position position="492"/>
    </location>
    <ligand>
        <name>ATP</name>
        <dbReference type="ChEBI" id="CHEBI:30616"/>
    </ligand>
</feature>